<gene>
    <name evidence="1" type="primary">pdxT</name>
    <name type="ordered locus">Exig_0011</name>
</gene>
<sequence length="192" mass="20920">MVIGILGVQGAVREHQEMLHLLGVKTMIVKSSADLDGIDGLIFPGGESTTIRRLIDRYGLLDVLRRQADTLPMFGTCAGMILLASELTEGPSHLGAIPMTVRRNAFGRQIDSFETSLNVEGAGQDIEAVFIRAPFVEQVGEGVRVLAAIGIAAVVVETDLHLACSFHPELTSDRRLHDYFIQKIRRRTAVSV</sequence>
<proteinExistence type="inferred from homology"/>
<keyword id="KW-0315">Glutamine amidotransferase</keyword>
<keyword id="KW-0378">Hydrolase</keyword>
<keyword id="KW-0456">Lyase</keyword>
<keyword id="KW-0663">Pyridoxal phosphate</keyword>
<keyword id="KW-1185">Reference proteome</keyword>
<accession>B1YGC2</accession>
<organism>
    <name type="scientific">Exiguobacterium sibiricum (strain DSM 17290 / CCUG 55495 / CIP 109462 / JCM 13490 / 255-15)</name>
    <dbReference type="NCBI Taxonomy" id="262543"/>
    <lineage>
        <taxon>Bacteria</taxon>
        <taxon>Bacillati</taxon>
        <taxon>Bacillota</taxon>
        <taxon>Bacilli</taxon>
        <taxon>Bacillales</taxon>
        <taxon>Bacillales Family XII. Incertae Sedis</taxon>
        <taxon>Exiguobacterium</taxon>
    </lineage>
</organism>
<dbReference type="EC" id="4.3.3.6" evidence="1"/>
<dbReference type="EC" id="3.5.1.2" evidence="1"/>
<dbReference type="EMBL" id="CP001022">
    <property type="protein sequence ID" value="ACB59499.1"/>
    <property type="molecule type" value="Genomic_DNA"/>
</dbReference>
<dbReference type="RefSeq" id="WP_012368925.1">
    <property type="nucleotide sequence ID" value="NC_010556.1"/>
</dbReference>
<dbReference type="SMR" id="B1YGC2"/>
<dbReference type="STRING" id="262543.Exig_0011"/>
<dbReference type="MEROPS" id="C26.A32"/>
<dbReference type="KEGG" id="esi:Exig_0011"/>
<dbReference type="eggNOG" id="COG0311">
    <property type="taxonomic scope" value="Bacteria"/>
</dbReference>
<dbReference type="HOGENOM" id="CLU_069674_2_0_9"/>
<dbReference type="OrthoDB" id="9810320at2"/>
<dbReference type="UniPathway" id="UPA00245"/>
<dbReference type="Proteomes" id="UP000001681">
    <property type="component" value="Chromosome"/>
</dbReference>
<dbReference type="GO" id="GO:0005829">
    <property type="term" value="C:cytosol"/>
    <property type="evidence" value="ECO:0007669"/>
    <property type="project" value="TreeGrafter"/>
</dbReference>
<dbReference type="GO" id="GO:1903600">
    <property type="term" value="C:glutaminase complex"/>
    <property type="evidence" value="ECO:0007669"/>
    <property type="project" value="TreeGrafter"/>
</dbReference>
<dbReference type="GO" id="GO:0004359">
    <property type="term" value="F:glutaminase activity"/>
    <property type="evidence" value="ECO:0007669"/>
    <property type="project" value="UniProtKB-UniRule"/>
</dbReference>
<dbReference type="GO" id="GO:0036381">
    <property type="term" value="F:pyridoxal 5'-phosphate synthase (glutamine hydrolysing) activity"/>
    <property type="evidence" value="ECO:0007669"/>
    <property type="project" value="UniProtKB-UniRule"/>
</dbReference>
<dbReference type="GO" id="GO:0006543">
    <property type="term" value="P:glutamine catabolic process"/>
    <property type="evidence" value="ECO:0007669"/>
    <property type="project" value="UniProtKB-UniRule"/>
</dbReference>
<dbReference type="GO" id="GO:0042823">
    <property type="term" value="P:pyridoxal phosphate biosynthetic process"/>
    <property type="evidence" value="ECO:0007669"/>
    <property type="project" value="UniProtKB-UniRule"/>
</dbReference>
<dbReference type="GO" id="GO:0008614">
    <property type="term" value="P:pyridoxine metabolic process"/>
    <property type="evidence" value="ECO:0007669"/>
    <property type="project" value="TreeGrafter"/>
</dbReference>
<dbReference type="CDD" id="cd01749">
    <property type="entry name" value="GATase1_PB"/>
    <property type="match status" value="1"/>
</dbReference>
<dbReference type="FunFam" id="3.40.50.880:FF:000010">
    <property type="entry name" value="uncharacterized protein LOC100176842 isoform X2"/>
    <property type="match status" value="1"/>
</dbReference>
<dbReference type="Gene3D" id="3.40.50.880">
    <property type="match status" value="1"/>
</dbReference>
<dbReference type="HAMAP" id="MF_01615">
    <property type="entry name" value="PdxT"/>
    <property type="match status" value="1"/>
</dbReference>
<dbReference type="InterPro" id="IPR029062">
    <property type="entry name" value="Class_I_gatase-like"/>
</dbReference>
<dbReference type="InterPro" id="IPR002161">
    <property type="entry name" value="PdxT/SNO"/>
</dbReference>
<dbReference type="InterPro" id="IPR021196">
    <property type="entry name" value="PdxT/SNO_CS"/>
</dbReference>
<dbReference type="NCBIfam" id="TIGR03800">
    <property type="entry name" value="PLP_synth_Pdx2"/>
    <property type="match status" value="1"/>
</dbReference>
<dbReference type="PANTHER" id="PTHR31559">
    <property type="entry name" value="PYRIDOXAL 5'-PHOSPHATE SYNTHASE SUBUNIT SNO"/>
    <property type="match status" value="1"/>
</dbReference>
<dbReference type="PANTHER" id="PTHR31559:SF0">
    <property type="entry name" value="PYRIDOXAL 5'-PHOSPHATE SYNTHASE SUBUNIT SNO1-RELATED"/>
    <property type="match status" value="1"/>
</dbReference>
<dbReference type="Pfam" id="PF01174">
    <property type="entry name" value="SNO"/>
    <property type="match status" value="1"/>
</dbReference>
<dbReference type="PIRSF" id="PIRSF005639">
    <property type="entry name" value="Glut_amidoT_SNO"/>
    <property type="match status" value="1"/>
</dbReference>
<dbReference type="SUPFAM" id="SSF52317">
    <property type="entry name" value="Class I glutamine amidotransferase-like"/>
    <property type="match status" value="1"/>
</dbReference>
<dbReference type="PROSITE" id="PS01236">
    <property type="entry name" value="PDXT_SNO_1"/>
    <property type="match status" value="1"/>
</dbReference>
<dbReference type="PROSITE" id="PS51130">
    <property type="entry name" value="PDXT_SNO_2"/>
    <property type="match status" value="1"/>
</dbReference>
<evidence type="ECO:0000255" key="1">
    <source>
        <dbReference type="HAMAP-Rule" id="MF_01615"/>
    </source>
</evidence>
<comment type="function">
    <text evidence="1">Catalyzes the hydrolysis of glutamine to glutamate and ammonia as part of the biosynthesis of pyridoxal 5'-phosphate. The resulting ammonia molecule is channeled to the active site of PdxS.</text>
</comment>
<comment type="catalytic activity">
    <reaction evidence="1">
        <text>aldehydo-D-ribose 5-phosphate + D-glyceraldehyde 3-phosphate + L-glutamine = pyridoxal 5'-phosphate + L-glutamate + phosphate + 3 H2O + H(+)</text>
        <dbReference type="Rhea" id="RHEA:31507"/>
        <dbReference type="ChEBI" id="CHEBI:15377"/>
        <dbReference type="ChEBI" id="CHEBI:15378"/>
        <dbReference type="ChEBI" id="CHEBI:29985"/>
        <dbReference type="ChEBI" id="CHEBI:43474"/>
        <dbReference type="ChEBI" id="CHEBI:58273"/>
        <dbReference type="ChEBI" id="CHEBI:58359"/>
        <dbReference type="ChEBI" id="CHEBI:59776"/>
        <dbReference type="ChEBI" id="CHEBI:597326"/>
        <dbReference type="EC" id="4.3.3.6"/>
    </reaction>
</comment>
<comment type="catalytic activity">
    <reaction evidence="1">
        <text>L-glutamine + H2O = L-glutamate + NH4(+)</text>
        <dbReference type="Rhea" id="RHEA:15889"/>
        <dbReference type="ChEBI" id="CHEBI:15377"/>
        <dbReference type="ChEBI" id="CHEBI:28938"/>
        <dbReference type="ChEBI" id="CHEBI:29985"/>
        <dbReference type="ChEBI" id="CHEBI:58359"/>
        <dbReference type="EC" id="3.5.1.2"/>
    </reaction>
</comment>
<comment type="pathway">
    <text evidence="1">Cofactor biosynthesis; pyridoxal 5'-phosphate biosynthesis.</text>
</comment>
<comment type="subunit">
    <text evidence="1">In the presence of PdxS, forms a dodecamer of heterodimers. Only shows activity in the heterodimer.</text>
</comment>
<comment type="similarity">
    <text evidence="1">Belongs to the glutaminase PdxT/SNO family.</text>
</comment>
<protein>
    <recommendedName>
        <fullName evidence="1">Pyridoxal 5'-phosphate synthase subunit PdxT</fullName>
        <ecNumber evidence="1">4.3.3.6</ecNumber>
    </recommendedName>
    <alternativeName>
        <fullName evidence="1">Pdx2</fullName>
    </alternativeName>
    <alternativeName>
        <fullName evidence="1">Pyridoxal 5'-phosphate synthase glutaminase subunit</fullName>
        <ecNumber evidence="1">3.5.1.2</ecNumber>
    </alternativeName>
</protein>
<feature type="chain" id="PRO_1000215714" description="Pyridoxal 5'-phosphate synthase subunit PdxT">
    <location>
        <begin position="1"/>
        <end position="192"/>
    </location>
</feature>
<feature type="active site" description="Nucleophile" evidence="1">
    <location>
        <position position="77"/>
    </location>
</feature>
<feature type="active site" description="Charge relay system" evidence="1">
    <location>
        <position position="167"/>
    </location>
</feature>
<feature type="active site" description="Charge relay system" evidence="1">
    <location>
        <position position="169"/>
    </location>
</feature>
<feature type="binding site" evidence="1">
    <location>
        <begin position="46"/>
        <end position="48"/>
    </location>
    <ligand>
        <name>L-glutamine</name>
        <dbReference type="ChEBI" id="CHEBI:58359"/>
    </ligand>
</feature>
<feature type="binding site" evidence="1">
    <location>
        <position position="103"/>
    </location>
    <ligand>
        <name>L-glutamine</name>
        <dbReference type="ChEBI" id="CHEBI:58359"/>
    </ligand>
</feature>
<feature type="binding site" evidence="1">
    <location>
        <begin position="131"/>
        <end position="132"/>
    </location>
    <ligand>
        <name>L-glutamine</name>
        <dbReference type="ChEBI" id="CHEBI:58359"/>
    </ligand>
</feature>
<name>PDXT_EXIS2</name>
<reference key="1">
    <citation type="submission" date="2008-04" db="EMBL/GenBank/DDBJ databases">
        <title>Complete sequence of chromosome of Exiguobacterium sibiricum 255-15.</title>
        <authorList>
            <consortium name="US DOE Joint Genome Institute"/>
            <person name="Copeland A."/>
            <person name="Lucas S."/>
            <person name="Lapidus A."/>
            <person name="Glavina del Rio T."/>
            <person name="Dalin E."/>
            <person name="Tice H."/>
            <person name="Bruce D."/>
            <person name="Goodwin L."/>
            <person name="Pitluck S."/>
            <person name="Kiss H."/>
            <person name="Chertkov O."/>
            <person name="Monk C."/>
            <person name="Brettin T."/>
            <person name="Detter J.C."/>
            <person name="Han C."/>
            <person name="Kuske C.R."/>
            <person name="Schmutz J."/>
            <person name="Larimer F."/>
            <person name="Land M."/>
            <person name="Hauser L."/>
            <person name="Kyrpides N."/>
            <person name="Mikhailova N."/>
            <person name="Vishnivetskaya T."/>
            <person name="Rodrigues D.F."/>
            <person name="Gilichinsky D."/>
            <person name="Tiedje J."/>
            <person name="Richardson P."/>
        </authorList>
    </citation>
    <scope>NUCLEOTIDE SEQUENCE [LARGE SCALE GENOMIC DNA]</scope>
    <source>
        <strain>DSM 17290 / CCUG 55495 / CIP 109462 / JCM 13490 / 255-15</strain>
    </source>
</reference>